<comment type="function">
    <text>Sequence-specific transcription factor which is part of a developmental regulatory system that provides cells with specific positional identities on the anterior-posterior axis.</text>
</comment>
<comment type="subcellular location">
    <subcellularLocation>
        <location evidence="3">Nucleus</location>
    </subcellularLocation>
</comment>
<comment type="similarity">
    <text evidence="3">Belongs to the Antp homeobox family.</text>
</comment>
<dbReference type="EMBL" id="CH477608">
    <property type="protein sequence ID" value="EAT38357.1"/>
    <property type="molecule type" value="Genomic_DNA"/>
</dbReference>
<dbReference type="EMBL" id="X67132">
    <property type="protein sequence ID" value="CAA47611.1"/>
    <property type="molecule type" value="Genomic_DNA"/>
</dbReference>
<dbReference type="RefSeq" id="XP_001660313.1">
    <property type="nucleotide sequence ID" value="XM_001660263.1"/>
</dbReference>
<dbReference type="SMR" id="P29552"/>
<dbReference type="STRING" id="7159.P29552"/>
<dbReference type="PaxDb" id="7159-AAEL009742-PA"/>
<dbReference type="VEuPathDB" id="VectorBase:AAEL009742"/>
<dbReference type="eggNOG" id="KOG0489">
    <property type="taxonomic scope" value="Eukaryota"/>
</dbReference>
<dbReference type="HOGENOM" id="CLU_1161960_0_0_1"/>
<dbReference type="InParanoid" id="P29552"/>
<dbReference type="OMA" id="HINFGRT"/>
<dbReference type="PhylomeDB" id="P29552"/>
<dbReference type="Proteomes" id="UP000008820">
    <property type="component" value="Chromosome 1"/>
</dbReference>
<dbReference type="Proteomes" id="UP000682892">
    <property type="component" value="Unassembled WGS sequence"/>
</dbReference>
<dbReference type="GO" id="GO:0005634">
    <property type="term" value="C:nucleus"/>
    <property type="evidence" value="ECO:0007669"/>
    <property type="project" value="UniProtKB-SubCell"/>
</dbReference>
<dbReference type="GO" id="GO:0003700">
    <property type="term" value="F:DNA-binding transcription factor activity"/>
    <property type="evidence" value="ECO:0000250"/>
    <property type="project" value="UniProtKB"/>
</dbReference>
<dbReference type="GO" id="GO:0000981">
    <property type="term" value="F:DNA-binding transcription factor activity, RNA polymerase II-specific"/>
    <property type="evidence" value="ECO:0007669"/>
    <property type="project" value="InterPro"/>
</dbReference>
<dbReference type="GO" id="GO:0000978">
    <property type="term" value="F:RNA polymerase II cis-regulatory region sequence-specific DNA binding"/>
    <property type="evidence" value="ECO:0007669"/>
    <property type="project" value="TreeGrafter"/>
</dbReference>
<dbReference type="GO" id="GO:0009952">
    <property type="term" value="P:anterior/posterior pattern specification"/>
    <property type="evidence" value="ECO:0000250"/>
    <property type="project" value="UniProtKB"/>
</dbReference>
<dbReference type="GO" id="GO:0000122">
    <property type="term" value="P:negative regulation of transcription by RNA polymerase II"/>
    <property type="evidence" value="ECO:0007669"/>
    <property type="project" value="TreeGrafter"/>
</dbReference>
<dbReference type="GO" id="GO:0006355">
    <property type="term" value="P:regulation of DNA-templated transcription"/>
    <property type="evidence" value="ECO:0000250"/>
    <property type="project" value="UniProtKB"/>
</dbReference>
<dbReference type="CDD" id="cd00086">
    <property type="entry name" value="homeodomain"/>
    <property type="match status" value="1"/>
</dbReference>
<dbReference type="FunFam" id="1.10.10.60:FF:000317">
    <property type="entry name" value="homeobox protein abdominal-A"/>
    <property type="match status" value="1"/>
</dbReference>
<dbReference type="Gene3D" id="1.10.10.60">
    <property type="entry name" value="Homeodomain-like"/>
    <property type="match status" value="1"/>
</dbReference>
<dbReference type="InterPro" id="IPR022132">
    <property type="entry name" value="Abdominal-A"/>
</dbReference>
<dbReference type="InterPro" id="IPR050296">
    <property type="entry name" value="Antp_homeobox"/>
</dbReference>
<dbReference type="InterPro" id="IPR001356">
    <property type="entry name" value="HD"/>
</dbReference>
<dbReference type="InterPro" id="IPR020479">
    <property type="entry name" value="HD_metazoa"/>
</dbReference>
<dbReference type="InterPro" id="IPR017970">
    <property type="entry name" value="Homeobox_CS"/>
</dbReference>
<dbReference type="InterPro" id="IPR009057">
    <property type="entry name" value="Homeodomain-like_sf"/>
</dbReference>
<dbReference type="PANTHER" id="PTHR45659:SF4">
    <property type="entry name" value="HOMEOBOX PROTEIN ABDOMINAL-A"/>
    <property type="match status" value="1"/>
</dbReference>
<dbReference type="PANTHER" id="PTHR45659">
    <property type="entry name" value="HOMEOBOX PROTEIN HOX"/>
    <property type="match status" value="1"/>
</dbReference>
<dbReference type="Pfam" id="PF12407">
    <property type="entry name" value="Abdominal-A"/>
    <property type="match status" value="1"/>
</dbReference>
<dbReference type="Pfam" id="PF00046">
    <property type="entry name" value="Homeodomain"/>
    <property type="match status" value="1"/>
</dbReference>
<dbReference type="PRINTS" id="PR00024">
    <property type="entry name" value="HOMEOBOX"/>
</dbReference>
<dbReference type="SMART" id="SM00389">
    <property type="entry name" value="HOX"/>
    <property type="match status" value="1"/>
</dbReference>
<dbReference type="SUPFAM" id="SSF46689">
    <property type="entry name" value="Homeodomain-like"/>
    <property type="match status" value="1"/>
</dbReference>
<dbReference type="PROSITE" id="PS00027">
    <property type="entry name" value="HOMEOBOX_1"/>
    <property type="match status" value="1"/>
</dbReference>
<dbReference type="PROSITE" id="PS50071">
    <property type="entry name" value="HOMEOBOX_2"/>
    <property type="match status" value="1"/>
</dbReference>
<evidence type="ECO:0000255" key="1">
    <source>
        <dbReference type="PROSITE-ProRule" id="PRU00108"/>
    </source>
</evidence>
<evidence type="ECO:0000256" key="2">
    <source>
        <dbReference type="SAM" id="MobiDB-lite"/>
    </source>
</evidence>
<evidence type="ECO:0000305" key="3"/>
<keyword id="KW-0217">Developmental protein</keyword>
<keyword id="KW-0238">DNA-binding</keyword>
<keyword id="KW-0371">Homeobox</keyword>
<keyword id="KW-0539">Nucleus</keyword>
<keyword id="KW-1185">Reference proteome</keyword>
<organism>
    <name type="scientific">Aedes aegypti</name>
    <name type="common">Yellowfever mosquito</name>
    <name type="synonym">Culex aegypti</name>
    <dbReference type="NCBI Taxonomy" id="7159"/>
    <lineage>
        <taxon>Eukaryota</taxon>
        <taxon>Metazoa</taxon>
        <taxon>Ecdysozoa</taxon>
        <taxon>Arthropoda</taxon>
        <taxon>Hexapoda</taxon>
        <taxon>Insecta</taxon>
        <taxon>Pterygota</taxon>
        <taxon>Neoptera</taxon>
        <taxon>Endopterygota</taxon>
        <taxon>Diptera</taxon>
        <taxon>Nematocera</taxon>
        <taxon>Culicoidea</taxon>
        <taxon>Culicidae</taxon>
        <taxon>Culicinae</taxon>
        <taxon>Aedini</taxon>
        <taxon>Aedes</taxon>
        <taxon>Stegomyia</taxon>
    </lineage>
</organism>
<feature type="chain" id="PRO_0000200250" description="Homeobox protein abdominal-A homolog">
    <location>
        <begin position="1"/>
        <end position="239"/>
    </location>
</feature>
<feature type="DNA-binding region" description="Homeobox" evidence="1">
    <location>
        <begin position="21"/>
        <end position="80"/>
    </location>
</feature>
<feature type="region of interest" description="Disordered" evidence="2">
    <location>
        <begin position="90"/>
        <end position="148"/>
    </location>
</feature>
<feature type="compositionally biased region" description="Basic and acidic residues" evidence="2">
    <location>
        <begin position="90"/>
        <end position="104"/>
    </location>
</feature>
<feature type="compositionally biased region" description="Low complexity" evidence="2">
    <location>
        <begin position="106"/>
        <end position="128"/>
    </location>
</feature>
<feature type="compositionally biased region" description="Gly residues" evidence="2">
    <location>
        <begin position="129"/>
        <end position="142"/>
    </location>
</feature>
<sequence>MSNPFDRVVCGDFAGPNGCPRRRGRQTYTRFQTLELEKEFHFNHYLTRRRRIEIAHALCLTERQIKIWFQNRRMKLKKELRAVKEINEQARREREEQDKMKNDSLKSAQQHHNSQKQQEQTIVGSQQSSGGGGGGGGGGGSSSLGSHLHHPSIVAQNDLKLGLGSMGVGVGVGGNLSMMGGLDNKTNQDILKARGSLVRESFFTVNETILRLRWTTREYVIVALFYPVAASSLLLKFRD</sequence>
<proteinExistence type="inferred from homology"/>
<reference key="1">
    <citation type="journal article" date="2007" name="Science">
        <title>Genome sequence of Aedes aegypti, a major arbovirus vector.</title>
        <authorList>
            <person name="Nene V."/>
            <person name="Wortman J.R."/>
            <person name="Lawson D."/>
            <person name="Haas B.J."/>
            <person name="Kodira C.D."/>
            <person name="Tu Z.J."/>
            <person name="Loftus B.J."/>
            <person name="Xi Z."/>
            <person name="Megy K."/>
            <person name="Grabherr M."/>
            <person name="Ren Q."/>
            <person name="Zdobnov E.M."/>
            <person name="Lobo N.F."/>
            <person name="Campbell K.S."/>
            <person name="Brown S.E."/>
            <person name="Bonaldo M.F."/>
            <person name="Zhu J."/>
            <person name="Sinkins S.P."/>
            <person name="Hogenkamp D.G."/>
            <person name="Amedeo P."/>
            <person name="Arensburger P."/>
            <person name="Atkinson P.W."/>
            <person name="Bidwell S.L."/>
            <person name="Biedler J."/>
            <person name="Birney E."/>
            <person name="Bruggner R.V."/>
            <person name="Costas J."/>
            <person name="Coy M.R."/>
            <person name="Crabtree J."/>
            <person name="Crawford M."/>
            <person name="DeBruyn B."/>
            <person name="DeCaprio D."/>
            <person name="Eiglmeier K."/>
            <person name="Eisenstadt E."/>
            <person name="El-Dorry H."/>
            <person name="Gelbart W.M."/>
            <person name="Gomes S.L."/>
            <person name="Hammond M."/>
            <person name="Hannick L.I."/>
            <person name="Hogan J.R."/>
            <person name="Holmes M.H."/>
            <person name="Jaffe D."/>
            <person name="Johnston S.J."/>
            <person name="Kennedy R.C."/>
            <person name="Koo H."/>
            <person name="Kravitz S."/>
            <person name="Kriventseva E.V."/>
            <person name="Kulp D."/>
            <person name="Labutti K."/>
            <person name="Lee E."/>
            <person name="Li S."/>
            <person name="Lovin D.D."/>
            <person name="Mao C."/>
            <person name="Mauceli E."/>
            <person name="Menck C.F."/>
            <person name="Miller J.R."/>
            <person name="Montgomery P."/>
            <person name="Mori A."/>
            <person name="Nascimento A.L."/>
            <person name="Naveira H.F."/>
            <person name="Nusbaum C."/>
            <person name="O'Leary S.B."/>
            <person name="Orvis J."/>
            <person name="Pertea M."/>
            <person name="Quesneville H."/>
            <person name="Reidenbach K.R."/>
            <person name="Rogers Y.-H.C."/>
            <person name="Roth C.W."/>
            <person name="Schneider J.R."/>
            <person name="Schatz M."/>
            <person name="Shumway M."/>
            <person name="Stanke M."/>
            <person name="Stinson E.O."/>
            <person name="Tubio J.M.C."/>
            <person name="Vanzee J.P."/>
            <person name="Verjovski-Almeida S."/>
            <person name="Werner D."/>
            <person name="White O.R."/>
            <person name="Wyder S."/>
            <person name="Zeng Q."/>
            <person name="Zhao Q."/>
            <person name="Zhao Y."/>
            <person name="Hill C.A."/>
            <person name="Raikhel A.S."/>
            <person name="Soares M.B."/>
            <person name="Knudson D.L."/>
            <person name="Lee N.H."/>
            <person name="Galagan J."/>
            <person name="Salzberg S.L."/>
            <person name="Paulsen I.T."/>
            <person name="Dimopoulos G."/>
            <person name="Collins F.H."/>
            <person name="Bruce B."/>
            <person name="Fraser-Liggett C.M."/>
            <person name="Severson D.W."/>
        </authorList>
    </citation>
    <scope>NUCLEOTIDE SEQUENCE [LARGE SCALE GENOMIC DNA]</scope>
    <source>
        <strain>LVPib12</strain>
    </source>
</reference>
<reference key="2">
    <citation type="journal article" date="1992" name="Nucleic Acids Res.">
        <title>Identification of the abdominal-A homologue from Aedes aegypti and structural comparisons among related genes.</title>
        <authorList>
            <person name="Eggleston P."/>
        </authorList>
    </citation>
    <scope>NUCLEOTIDE SEQUENCE [GENOMIC DNA] OF 16-89</scope>
    <source>
        <strain>Bangkok</strain>
    </source>
</reference>
<protein>
    <recommendedName>
        <fullName>Homeobox protein abdominal-A homolog</fullName>
    </recommendedName>
</protein>
<gene>
    <name type="primary">abd-A</name>
    <name type="ORF">AAEL009742</name>
</gene>
<accession>P29552</accession>
<accession>Q16UZ6</accession>
<name>ABDA_AEDAE</name>